<protein>
    <recommendedName>
        <fullName evidence="3">Small ribosomal subunit protein eS1A</fullName>
    </recommendedName>
    <alternativeName>
        <fullName evidence="5">40S ribosomal protein S1-A</fullName>
    </alternativeName>
</protein>
<comment type="subunit">
    <text evidence="3">Component of the small ribosomal subunit. Mature ribosomes consist of a small (40S) and a large (60S) subunit. The 40S subunit contains about 33 different proteins and 1 molecule of RNA (18S). The 60S subunit contains about 49 different proteins and 3 molecules of RNA (25S, 5.8S and 5S).</text>
</comment>
<comment type="subcellular location">
    <subcellularLocation>
        <location evidence="3">Cytoplasm</location>
    </subcellularLocation>
</comment>
<comment type="similarity">
    <text evidence="3">Belongs to the eukaryotic ribosomal protein eS1 family.</text>
</comment>
<feature type="initiator methionine" description="Removed" evidence="3">
    <location>
        <position position="1"/>
    </location>
</feature>
<feature type="chain" id="PRO_0000389410" description="Small ribosomal subunit protein eS1A">
    <location>
        <begin position="2"/>
        <end position="255"/>
    </location>
</feature>
<feature type="region of interest" description="Disordered" evidence="4">
    <location>
        <begin position="1"/>
        <end position="20"/>
    </location>
</feature>
<feature type="compositionally biased region" description="Basic residues" evidence="4">
    <location>
        <begin position="1"/>
        <end position="18"/>
    </location>
</feature>
<feature type="modified residue" description="N-acetylalanine; partial" evidence="2 3">
    <location>
        <position position="2"/>
    </location>
</feature>
<feature type="modified residue" description="Phosphothreonine" evidence="2">
    <location>
        <position position="245"/>
    </location>
</feature>
<feature type="modified residue" description="Phosphothreonine" evidence="2">
    <location>
        <position position="254"/>
    </location>
</feature>
<feature type="cross-link" description="Glycyl lysine isopeptide (Lys-Gly) (interchain with G-Cter in ubiquitin)" evidence="1">
    <location>
        <position position="248"/>
    </location>
</feature>
<keyword id="KW-0007">Acetylation</keyword>
<keyword id="KW-0963">Cytoplasm</keyword>
<keyword id="KW-1017">Isopeptide bond</keyword>
<keyword id="KW-0597">Phosphoprotein</keyword>
<keyword id="KW-0687">Ribonucleoprotein</keyword>
<keyword id="KW-0689">Ribosomal protein</keyword>
<keyword id="KW-0832">Ubl conjugation</keyword>
<dbReference type="EMBL" id="AAFW02000171">
    <property type="protein sequence ID" value="EDN59339.1"/>
    <property type="molecule type" value="Genomic_DNA"/>
</dbReference>
<dbReference type="EMDB" id="EMD-14979"/>
<dbReference type="EMDB" id="EMD-16563"/>
<dbReference type="EMDB" id="EMD-16591"/>
<dbReference type="EMDB" id="EMD-16594"/>
<dbReference type="SMR" id="A7A1W1"/>
<dbReference type="HOGENOM" id="CLU_062507_0_0_1"/>
<dbReference type="Proteomes" id="UP000007060">
    <property type="component" value="Unassembled WGS sequence"/>
</dbReference>
<dbReference type="GO" id="GO:0022627">
    <property type="term" value="C:cytosolic small ribosomal subunit"/>
    <property type="evidence" value="ECO:0007669"/>
    <property type="project" value="UniProtKB-UniRule"/>
</dbReference>
<dbReference type="GO" id="GO:0003735">
    <property type="term" value="F:structural constituent of ribosome"/>
    <property type="evidence" value="ECO:0007669"/>
    <property type="project" value="UniProtKB-UniRule"/>
</dbReference>
<dbReference type="GO" id="GO:0006412">
    <property type="term" value="P:translation"/>
    <property type="evidence" value="ECO:0007669"/>
    <property type="project" value="UniProtKB-UniRule"/>
</dbReference>
<dbReference type="HAMAP" id="MF_03122">
    <property type="entry name" value="Ribosomal_eS1_euk"/>
    <property type="match status" value="1"/>
</dbReference>
<dbReference type="InterPro" id="IPR001593">
    <property type="entry name" value="Ribosomal_eS1"/>
</dbReference>
<dbReference type="InterPro" id="IPR018281">
    <property type="entry name" value="Ribosomal_eS1_CS"/>
</dbReference>
<dbReference type="InterPro" id="IPR027500">
    <property type="entry name" value="Ribosomal_eS1_euk"/>
</dbReference>
<dbReference type="PANTHER" id="PTHR11830">
    <property type="entry name" value="40S RIBOSOMAL PROTEIN S3A"/>
    <property type="match status" value="1"/>
</dbReference>
<dbReference type="Pfam" id="PF01015">
    <property type="entry name" value="Ribosomal_S3Ae"/>
    <property type="match status" value="1"/>
</dbReference>
<dbReference type="SMART" id="SM01397">
    <property type="entry name" value="Ribosomal_S3Ae"/>
    <property type="match status" value="1"/>
</dbReference>
<dbReference type="PROSITE" id="PS01191">
    <property type="entry name" value="RIBOSOMAL_S3AE"/>
    <property type="match status" value="1"/>
</dbReference>
<sequence>MAVGKNKRLSKGKKGQKKRVVDPFTRKEWFDIKAPSTFENRNVGKTLVNKSTGLKSASDALKGRVVEVCLADLQGSEDHSFRKIKLRVDEVQGKNLLTNFHGMDFTTDKLRSMVRKWQTLIEANVTVKTSDDYVLRIFAIAFTRKQANQVKRHSYAQSSHIRAIRKVISEILTKEVQGSTLAQLTSKLIPEVINKEIENATKDIFPLQNIHVRKVKLLKQPKFDVGALMALHGEGSGEEKGKKVTGFKDEVLETV</sequence>
<reference key="1">
    <citation type="journal article" date="2007" name="Proc. Natl. Acad. Sci. U.S.A.">
        <title>Genome sequencing and comparative analysis of Saccharomyces cerevisiae strain YJM789.</title>
        <authorList>
            <person name="Wei W."/>
            <person name="McCusker J.H."/>
            <person name="Hyman R.W."/>
            <person name="Jones T."/>
            <person name="Ning Y."/>
            <person name="Cao Z."/>
            <person name="Gu Z."/>
            <person name="Bruno D."/>
            <person name="Miranda M."/>
            <person name="Nguyen M."/>
            <person name="Wilhelmy J."/>
            <person name="Komp C."/>
            <person name="Tamse R."/>
            <person name="Wang X."/>
            <person name="Jia P."/>
            <person name="Luedi P."/>
            <person name="Oefner P.J."/>
            <person name="David L."/>
            <person name="Dietrich F.S."/>
            <person name="Li Y."/>
            <person name="Davis R.W."/>
            <person name="Steinmetz L.M."/>
        </authorList>
    </citation>
    <scope>NUCLEOTIDE SEQUENCE [LARGE SCALE GENOMIC DNA]</scope>
    <source>
        <strain>YJM789</strain>
    </source>
</reference>
<accession>A7A1W1</accession>
<organism>
    <name type="scientific">Saccharomyces cerevisiae (strain YJM789)</name>
    <name type="common">Baker's yeast</name>
    <dbReference type="NCBI Taxonomy" id="307796"/>
    <lineage>
        <taxon>Eukaryota</taxon>
        <taxon>Fungi</taxon>
        <taxon>Dikarya</taxon>
        <taxon>Ascomycota</taxon>
        <taxon>Saccharomycotina</taxon>
        <taxon>Saccharomycetes</taxon>
        <taxon>Saccharomycetales</taxon>
        <taxon>Saccharomycetaceae</taxon>
        <taxon>Saccharomyces</taxon>
    </lineage>
</organism>
<name>RS3A1_YEAS7</name>
<evidence type="ECO:0000250" key="1">
    <source>
        <dbReference type="UniProtKB" id="P23248"/>
    </source>
</evidence>
<evidence type="ECO:0000250" key="2">
    <source>
        <dbReference type="UniProtKB" id="P33442"/>
    </source>
</evidence>
<evidence type="ECO:0000255" key="3">
    <source>
        <dbReference type="HAMAP-Rule" id="MF_03122"/>
    </source>
</evidence>
<evidence type="ECO:0000256" key="4">
    <source>
        <dbReference type="SAM" id="MobiDB-lite"/>
    </source>
</evidence>
<evidence type="ECO:0000305" key="5"/>
<gene>
    <name evidence="3" type="primary">RPS1A</name>
    <name type="ORF">SCY_3989</name>
</gene>
<proteinExistence type="inferred from homology"/>